<organism>
    <name type="scientific">Plasmodium falciparum (isolate 3D7)</name>
    <dbReference type="NCBI Taxonomy" id="36329"/>
    <lineage>
        <taxon>Eukaryota</taxon>
        <taxon>Sar</taxon>
        <taxon>Alveolata</taxon>
        <taxon>Apicomplexa</taxon>
        <taxon>Aconoidasida</taxon>
        <taxon>Haemosporida</taxon>
        <taxon>Plasmodiidae</taxon>
        <taxon>Plasmodium</taxon>
        <taxon>Plasmodium (Laverania)</taxon>
    </lineage>
</organism>
<feature type="chain" id="PRO_0000388171" description="ATPase ASNA1 homolog">
    <location>
        <begin position="1"/>
        <end position="379"/>
    </location>
</feature>
<feature type="region of interest" description="Disordered" evidence="2">
    <location>
        <begin position="1"/>
        <end position="20"/>
    </location>
</feature>
<feature type="compositionally biased region" description="Low complexity" evidence="2">
    <location>
        <begin position="7"/>
        <end position="18"/>
    </location>
</feature>
<feature type="active site" evidence="1">
    <location>
        <position position="75"/>
    </location>
</feature>
<feature type="binding site" evidence="1">
    <location>
        <begin position="46"/>
        <end position="53"/>
    </location>
    <ligand>
        <name>ATP</name>
        <dbReference type="ChEBI" id="CHEBI:30616"/>
    </ligand>
</feature>
<feature type="binding site" evidence="1">
    <location>
        <position position="246"/>
    </location>
    <ligand>
        <name>ATP</name>
        <dbReference type="ChEBI" id="CHEBI:30616"/>
    </ligand>
</feature>
<feature type="binding site" evidence="1">
    <location>
        <position position="273"/>
    </location>
    <ligand>
        <name>ATP</name>
        <dbReference type="ChEBI" id="CHEBI:30616"/>
    </ligand>
</feature>
<keyword id="KW-0067">ATP-binding</keyword>
<keyword id="KW-0963">Cytoplasm</keyword>
<keyword id="KW-0256">Endoplasmic reticulum</keyword>
<keyword id="KW-0378">Hydrolase</keyword>
<keyword id="KW-0547">Nucleotide-binding</keyword>
<keyword id="KW-1185">Reference proteome</keyword>
<keyword id="KW-0813">Transport</keyword>
<sequence>MSEDESNSVSCSLSLESDGYSDEEYDTNLNKLIENESLNWIFVGGKGGVGKTTTSCSIAVQLSKRRESVLLLSTDPAHNTSDAFNQKFTNQPTLINSFDNLYCMEIDTNYSENTAFKLNKKEMFDNILPELLHSFPGIDEALCFAELMQSIKNMKYSVIVFDTAPTGHTLRLLAFPDLLKKALGYLINIREKLKGTLNVLKNFTNNEMEFDSLYEKINHLNAMSSSIQANFQNPMKTTFVCVCIPEFLSVYETERLIQELTKKNISCYNIVVNQVVFPLDSPNVNLENCKNLLSQIKNEQIQSYFNDLISKTEELEDVYISRRKLQSKYLTQIKNLYSNDFHIVCMPQLKNEIRGLNNISSFSEMLLQSKDIPIYKDNL</sequence>
<comment type="function">
    <text evidence="1">ATPase required for the post-translational delivery of tail-anchored (TA) proteins to the endoplasmic reticulum. Recognizes and selectively binds the transmembrane domain of TA proteins in the cytosol. This complex then targets to the endoplasmic reticulum by membrane-bound receptors, where the tail-anchored protein is released for insertion. This process is regulated by ATP binding and hydrolysis. ATP binding drives the homodimer towards the closed dimer state, facilitating recognition of newly synthesized TA membrane proteins. ATP hydrolysis is required for insertion. Subsequently, the homodimer reverts towards the open dimer state, lowering its affinity for the membrane-bound receptor, and returning it to the cytosol to initiate a new round of targeting.</text>
</comment>
<comment type="subunit">
    <text evidence="1">Homodimer.</text>
</comment>
<comment type="subcellular location">
    <subcellularLocation>
        <location evidence="1">Cytoplasm</location>
    </subcellularLocation>
    <subcellularLocation>
        <location evidence="1">Endoplasmic reticulum</location>
    </subcellularLocation>
</comment>
<comment type="similarity">
    <text evidence="1">Belongs to the arsA ATPase family.</text>
</comment>
<accession>Q8I1T8</accession>
<reference key="1">
    <citation type="journal article" date="2002" name="Nature">
        <title>Sequence of Plasmodium falciparum chromosomes 1, 3-9 and 13.</title>
        <authorList>
            <person name="Hall N."/>
            <person name="Pain A."/>
            <person name="Berriman M."/>
            <person name="Churcher C.M."/>
            <person name="Harris B."/>
            <person name="Harris D."/>
            <person name="Mungall K.L."/>
            <person name="Bowman S."/>
            <person name="Atkin R."/>
            <person name="Baker S."/>
            <person name="Barron A."/>
            <person name="Brooks K."/>
            <person name="Buckee C.O."/>
            <person name="Burrows C."/>
            <person name="Cherevach I."/>
            <person name="Chillingworth C."/>
            <person name="Chillingworth T."/>
            <person name="Christodoulou Z."/>
            <person name="Clark L."/>
            <person name="Clark R."/>
            <person name="Corton C."/>
            <person name="Cronin A."/>
            <person name="Davies R.M."/>
            <person name="Davis P."/>
            <person name="Dear P."/>
            <person name="Dearden F."/>
            <person name="Doggett J."/>
            <person name="Feltwell T."/>
            <person name="Goble A."/>
            <person name="Goodhead I."/>
            <person name="Gwilliam R."/>
            <person name="Hamlin N."/>
            <person name="Hance Z."/>
            <person name="Harper D."/>
            <person name="Hauser H."/>
            <person name="Hornsby T."/>
            <person name="Holroyd S."/>
            <person name="Horrocks P."/>
            <person name="Humphray S."/>
            <person name="Jagels K."/>
            <person name="James K.D."/>
            <person name="Johnson D."/>
            <person name="Kerhornou A."/>
            <person name="Knights A."/>
            <person name="Konfortov B."/>
            <person name="Kyes S."/>
            <person name="Larke N."/>
            <person name="Lawson D."/>
            <person name="Lennard N."/>
            <person name="Line A."/>
            <person name="Maddison M."/>
            <person name="Mclean J."/>
            <person name="Mooney P."/>
            <person name="Moule S."/>
            <person name="Murphy L."/>
            <person name="Oliver K."/>
            <person name="Ormond D."/>
            <person name="Price C."/>
            <person name="Quail M.A."/>
            <person name="Rabbinowitsch E."/>
            <person name="Rajandream M.A."/>
            <person name="Rutter S."/>
            <person name="Rutherford K.M."/>
            <person name="Sanders M."/>
            <person name="Simmonds M."/>
            <person name="Seeger K."/>
            <person name="Sharp S."/>
            <person name="Smith R."/>
            <person name="Squares R."/>
            <person name="Squares S."/>
            <person name="Stevens K."/>
            <person name="Taylor K."/>
            <person name="Tivey A."/>
            <person name="Unwin L."/>
            <person name="Whitehead S."/>
            <person name="Woodward J.R."/>
            <person name="Sulston J.E."/>
            <person name="Craig A."/>
            <person name="Newbold C."/>
            <person name="Barrell B.G."/>
        </authorList>
    </citation>
    <scope>NUCLEOTIDE SEQUENCE [LARGE SCALE GENOMIC DNA]</scope>
    <source>
        <strain>3D7</strain>
    </source>
</reference>
<reference key="2">
    <citation type="journal article" date="2002" name="Nature">
        <title>Genome sequence of the human malaria parasite Plasmodium falciparum.</title>
        <authorList>
            <person name="Gardner M.J."/>
            <person name="Hall N."/>
            <person name="Fung E."/>
            <person name="White O."/>
            <person name="Berriman M."/>
            <person name="Hyman R.W."/>
            <person name="Carlton J.M."/>
            <person name="Pain A."/>
            <person name="Nelson K.E."/>
            <person name="Bowman S."/>
            <person name="Paulsen I.T."/>
            <person name="James K.D."/>
            <person name="Eisen J.A."/>
            <person name="Rutherford K.M."/>
            <person name="Salzberg S.L."/>
            <person name="Craig A."/>
            <person name="Kyes S."/>
            <person name="Chan M.-S."/>
            <person name="Nene V."/>
            <person name="Shallom S.J."/>
            <person name="Suh B."/>
            <person name="Peterson J."/>
            <person name="Angiuoli S."/>
            <person name="Pertea M."/>
            <person name="Allen J."/>
            <person name="Selengut J."/>
            <person name="Haft D."/>
            <person name="Mather M.W."/>
            <person name="Vaidya A.B."/>
            <person name="Martin D.M.A."/>
            <person name="Fairlamb A.H."/>
            <person name="Fraunholz M.J."/>
            <person name="Roos D.S."/>
            <person name="Ralph S.A."/>
            <person name="McFadden G.I."/>
            <person name="Cummings L.M."/>
            <person name="Subramanian G.M."/>
            <person name="Mungall C."/>
            <person name="Venter J.C."/>
            <person name="Carucci D.J."/>
            <person name="Hoffman S.L."/>
            <person name="Newbold C."/>
            <person name="Davis R.W."/>
            <person name="Fraser C.M."/>
            <person name="Barrell B.G."/>
        </authorList>
    </citation>
    <scope>NUCLEOTIDE SEQUENCE [LARGE SCALE GENOMIC DNA]</scope>
    <source>
        <strain>3D7</strain>
    </source>
</reference>
<protein>
    <recommendedName>
        <fullName evidence="1">ATPase ASNA1 homolog</fullName>
        <ecNumber evidence="1">3.6.-.-</ecNumber>
    </recommendedName>
    <alternativeName>
        <fullName evidence="1">Arsenical pump-driving ATPase homolog</fullName>
    </alternativeName>
    <alternativeName>
        <fullName evidence="1">Arsenite-stimulated ATPase</fullName>
    </alternativeName>
</protein>
<name>ASNA_PLAF7</name>
<gene>
    <name type="ORF">PFD0725c</name>
</gene>
<proteinExistence type="inferred from homology"/>
<dbReference type="EC" id="3.6.-.-" evidence="1"/>
<dbReference type="EMBL" id="AL844503">
    <property type="protein sequence ID" value="CAD49186.1"/>
    <property type="molecule type" value="Genomic_DNA"/>
</dbReference>
<dbReference type="RefSeq" id="XP_001351457.1">
    <property type="nucleotide sequence ID" value="XM_001351421.1"/>
</dbReference>
<dbReference type="SMR" id="Q8I1T8"/>
<dbReference type="FunCoup" id="Q8I1T8">
    <property type="interactions" value="503"/>
</dbReference>
<dbReference type="STRING" id="36329.Q8I1T8"/>
<dbReference type="PaxDb" id="5833-PFD0725c"/>
<dbReference type="EnsemblProtists" id="CAD49186">
    <property type="protein sequence ID" value="CAD49186"/>
    <property type="gene ID" value="PF3D7_0415000"/>
</dbReference>
<dbReference type="KEGG" id="pfa:PF3D7_0415000"/>
<dbReference type="VEuPathDB" id="PlasmoDB:PF3D7_0415000"/>
<dbReference type="HOGENOM" id="CLU_040761_0_0_1"/>
<dbReference type="InParanoid" id="Q8I1T8"/>
<dbReference type="OMA" id="IGNNEPR"/>
<dbReference type="OrthoDB" id="1770at2759"/>
<dbReference type="PhylomeDB" id="Q8I1T8"/>
<dbReference type="Proteomes" id="UP000001450">
    <property type="component" value="Chromosome 4"/>
</dbReference>
<dbReference type="GO" id="GO:0043529">
    <property type="term" value="C:GET complex"/>
    <property type="evidence" value="ECO:0000318"/>
    <property type="project" value="GO_Central"/>
</dbReference>
<dbReference type="GO" id="GO:0016020">
    <property type="term" value="C:membrane"/>
    <property type="evidence" value="ECO:0000250"/>
    <property type="project" value="GeneDB"/>
</dbReference>
<dbReference type="GO" id="GO:0005524">
    <property type="term" value="F:ATP binding"/>
    <property type="evidence" value="ECO:0007669"/>
    <property type="project" value="UniProtKB-UniRule"/>
</dbReference>
<dbReference type="GO" id="GO:0016887">
    <property type="term" value="F:ATP hydrolysis activity"/>
    <property type="evidence" value="ECO:0000318"/>
    <property type="project" value="GO_Central"/>
</dbReference>
<dbReference type="GO" id="GO:0015446">
    <property type="term" value="F:ATPase-coupled arsenite transmembrane transporter activity"/>
    <property type="evidence" value="ECO:0000250"/>
    <property type="project" value="GeneDB"/>
</dbReference>
<dbReference type="GO" id="GO:0006811">
    <property type="term" value="P:monoatomic ion transport"/>
    <property type="evidence" value="ECO:0000250"/>
    <property type="project" value="GeneDB"/>
</dbReference>
<dbReference type="GO" id="GO:0071816">
    <property type="term" value="P:tail-anchored membrane protein insertion into ER membrane"/>
    <property type="evidence" value="ECO:0000318"/>
    <property type="project" value="GO_Central"/>
</dbReference>
<dbReference type="CDD" id="cd02035">
    <property type="entry name" value="ArsA"/>
    <property type="match status" value="1"/>
</dbReference>
<dbReference type="FunFam" id="3.40.50.300:FF:001459">
    <property type="entry name" value="ATPase ASNA1 homolog"/>
    <property type="match status" value="1"/>
</dbReference>
<dbReference type="Gene3D" id="3.40.50.300">
    <property type="entry name" value="P-loop containing nucleotide triphosphate hydrolases"/>
    <property type="match status" value="1"/>
</dbReference>
<dbReference type="HAMAP" id="MF_03112">
    <property type="entry name" value="Asna1_Get3"/>
    <property type="match status" value="1"/>
</dbReference>
<dbReference type="InterPro" id="IPR025723">
    <property type="entry name" value="Anion-transp_ATPase-like_dom"/>
</dbReference>
<dbReference type="InterPro" id="IPR016300">
    <property type="entry name" value="ATPase_ArsA/GET3"/>
</dbReference>
<dbReference type="InterPro" id="IPR027542">
    <property type="entry name" value="ATPase_ArsA/GET3_euk"/>
</dbReference>
<dbReference type="InterPro" id="IPR027417">
    <property type="entry name" value="P-loop_NTPase"/>
</dbReference>
<dbReference type="NCBIfam" id="TIGR00345">
    <property type="entry name" value="GET3_arsA_TRC40"/>
    <property type="match status" value="1"/>
</dbReference>
<dbReference type="PANTHER" id="PTHR10803">
    <property type="entry name" value="ARSENICAL PUMP-DRIVING ATPASE ARSENITE-TRANSLOCATING ATPASE"/>
    <property type="match status" value="1"/>
</dbReference>
<dbReference type="PANTHER" id="PTHR10803:SF3">
    <property type="entry name" value="ATPASE GET3"/>
    <property type="match status" value="1"/>
</dbReference>
<dbReference type="Pfam" id="PF02374">
    <property type="entry name" value="ArsA_ATPase"/>
    <property type="match status" value="2"/>
</dbReference>
<dbReference type="SUPFAM" id="SSF52540">
    <property type="entry name" value="P-loop containing nucleoside triphosphate hydrolases"/>
    <property type="match status" value="1"/>
</dbReference>
<evidence type="ECO:0000255" key="1">
    <source>
        <dbReference type="HAMAP-Rule" id="MF_03112"/>
    </source>
</evidence>
<evidence type="ECO:0000256" key="2">
    <source>
        <dbReference type="SAM" id="MobiDB-lite"/>
    </source>
</evidence>